<reference key="1">
    <citation type="journal article" date="1981" name="Cell">
        <title>Sequence and gene organization of mouse mitochondrial DNA.</title>
        <authorList>
            <person name="Bibb M.J."/>
            <person name="van Etten R.A."/>
            <person name="Wright C.T."/>
            <person name="Walberg M.W."/>
            <person name="Clayton D.A."/>
        </authorList>
    </citation>
    <scope>NUCLEOTIDE SEQUENCE [GENOMIC DNA]</scope>
</reference>
<reference key="2">
    <citation type="journal article" date="1994" name="Proc. Natl. Acad. Sci. U.S.A.">
        <title>Nonneutral evolution at the mitochondrial NADH dehydrogenase subunit 3 gene in mice.</title>
        <authorList>
            <person name="Nachman M.W."/>
            <person name="Boyer S.N."/>
            <person name="Aquadro C.F."/>
        </authorList>
    </citation>
    <scope>NUCLEOTIDE SEQUENCE [GENOMIC DNA]</scope>
</reference>
<reference key="3">
    <citation type="journal article" date="2001" name="J. Hered.">
        <title>Unique mutations in mitochondrial DNA of senescence-accelerated mouse (SAM) strains.</title>
        <authorList>
            <person name="Mizutani J."/>
            <person name="Chiba T."/>
            <person name="Tanaka M."/>
            <person name="Higuchi K."/>
            <person name="Mori M."/>
        </authorList>
    </citation>
    <scope>NUCLEOTIDE SEQUENCE [GENOMIC DNA]</scope>
    <source>
        <strain>AKR/J</strain>
        <strain>C3H/He</strain>
        <strain>SAMP1</strain>
        <strain>SAMP8</strain>
        <strain>SAMR1</strain>
        <tissue>Liver</tissue>
    </source>
</reference>
<reference key="4">
    <citation type="journal article" date="2003" name="Nucleic Acids Res.">
        <title>Revisiting the mouse mitochondrial DNA sequence.</title>
        <authorList>
            <person name="Bayona-Bafaluy M.P."/>
            <person name="Acin-Perez R."/>
            <person name="Mullikin J.C."/>
            <person name="Park J.S."/>
            <person name="Moreno-Loshuertos R."/>
            <person name="Hu P."/>
            <person name="Perez-Martos A."/>
            <person name="Fernandez-Silva P."/>
            <person name="Bai Y."/>
            <person name="Enriquez J.A."/>
        </authorList>
    </citation>
    <scope>NUCLEOTIDE SEQUENCE [LARGE SCALE GENOMIC DNA]</scope>
    <source>
        <strain>C57BL/6J</strain>
    </source>
</reference>
<reference key="5">
    <citation type="journal article" date="2010" name="Cell">
        <title>A tissue-specific atlas of mouse protein phosphorylation and expression.</title>
        <authorList>
            <person name="Huttlin E.L."/>
            <person name="Jedrychowski M.P."/>
            <person name="Elias J.E."/>
            <person name="Goswami T."/>
            <person name="Rad R."/>
            <person name="Beausoleil S.A."/>
            <person name="Villen J."/>
            <person name="Haas W."/>
            <person name="Sowa M.E."/>
            <person name="Gygi S.P."/>
        </authorList>
    </citation>
    <scope>IDENTIFICATION BY MASS SPECTROMETRY [LARGE SCALE ANALYSIS]</scope>
    <source>
        <tissue>Brain</tissue>
        <tissue>Brown adipose tissue</tissue>
        <tissue>Heart</tissue>
        <tissue>Kidney</tissue>
        <tissue>Liver</tissue>
        <tissue>Lung</tissue>
        <tissue>Pancreas</tissue>
        <tissue>Spleen</tissue>
        <tissue>Testis</tissue>
    </source>
</reference>
<reference evidence="6" key="6">
    <citation type="journal article" date="2024" name="Nat. Struct. Mol. Biol.">
        <title>SCAF1 drives the compositional diversity of mammalian respirasomes.</title>
        <authorList>
            <person name="Vercellino I."/>
            <person name="Sazanov L.A."/>
        </authorList>
    </citation>
    <scope>STRUCTURE BY ELECTRON MICROSCOPY (3.60 ANGSTROMS) IN COMPLEX WITH MITOCHONDRIAL RESPIRATORY SUPERCOMPLEX</scope>
    <scope>FUNCTION</scope>
    <scope>SUBCELLULAR LOCATION</scope>
    <scope>SUBUNIT</scope>
</reference>
<comment type="function">
    <text evidence="1 3">Core subunit of the mitochondrial membrane respiratory chain NADH dehydrogenase (Complex I) which catalyzes electron transfer from NADH through the respiratory chain, using ubiquinone as an electron acceptor (PubMed:38575788). Essential for the catalytic activity of complex I (By similarity).</text>
</comment>
<comment type="catalytic activity">
    <reaction evidence="1">
        <text>a ubiquinone + NADH + 5 H(+)(in) = a ubiquinol + NAD(+) + 4 H(+)(out)</text>
        <dbReference type="Rhea" id="RHEA:29091"/>
        <dbReference type="Rhea" id="RHEA-COMP:9565"/>
        <dbReference type="Rhea" id="RHEA-COMP:9566"/>
        <dbReference type="ChEBI" id="CHEBI:15378"/>
        <dbReference type="ChEBI" id="CHEBI:16389"/>
        <dbReference type="ChEBI" id="CHEBI:17976"/>
        <dbReference type="ChEBI" id="CHEBI:57540"/>
        <dbReference type="ChEBI" id="CHEBI:57945"/>
        <dbReference type="EC" id="7.1.1.2"/>
    </reaction>
</comment>
<comment type="subunit">
    <text evidence="1 3">Core subunit of respiratory chain NADH dehydrogenase (Complex I) which is composed of 45 different subunits (PubMed:38575788). Interacts with TMEM186 (By similarity). Interacts with TMEM242 (By similarity).</text>
</comment>
<comment type="subcellular location">
    <subcellularLocation>
        <location evidence="3">Mitochondrion inner membrane</location>
        <topology evidence="2">Multi-pass membrane protein</topology>
    </subcellularLocation>
</comment>
<comment type="similarity">
    <text evidence="4">Belongs to the complex I subunit 3 family.</text>
</comment>
<sequence length="115" mass="13219">MNLYTVIFINILLSLTLILVAFWLPQMNLYSEKANPYECGFDPTSSARLPFSMKFFLVAITFLLFDLEIALLLPLPWAIQTIKTSTMMIMAFILVTILSLGLAYEWTQKGLEWTE</sequence>
<proteinExistence type="evidence at protein level"/>
<feature type="chain" id="PRO_0000117765" description="NADH-ubiquinone oxidoreductase chain 3">
    <location>
        <begin position="1"/>
        <end position="115"/>
    </location>
</feature>
<feature type="transmembrane region" description="Helical" evidence="2">
    <location>
        <begin position="3"/>
        <end position="23"/>
    </location>
</feature>
<feature type="transmembrane region" description="Helical" evidence="2">
    <location>
        <begin position="55"/>
        <end position="75"/>
    </location>
</feature>
<feature type="transmembrane region" description="Helical" evidence="2">
    <location>
        <begin position="86"/>
        <end position="106"/>
    </location>
</feature>
<feature type="sequence conflict" description="In Ref. 2; AAA19255." evidence="4" ref="2">
    <original>T</original>
    <variation>A</variation>
    <location>
        <position position="16"/>
    </location>
</feature>
<feature type="sequence conflict" description="In Ref. 1; AAB48651/CAA24086." evidence="4" ref="1">
    <location>
        <position position="33"/>
    </location>
</feature>
<feature type="helix" evidence="9">
    <location>
        <begin position="2"/>
        <end position="23"/>
    </location>
</feature>
<feature type="helix" evidence="8">
    <location>
        <begin position="24"/>
        <end position="26"/>
    </location>
</feature>
<feature type="helix" evidence="9">
    <location>
        <begin position="31"/>
        <end position="34"/>
    </location>
</feature>
<feature type="helix" evidence="10">
    <location>
        <begin position="38"/>
        <end position="40"/>
    </location>
</feature>
<feature type="strand" evidence="7">
    <location>
        <begin position="47"/>
        <end position="49"/>
    </location>
</feature>
<feature type="helix" evidence="9">
    <location>
        <begin position="56"/>
        <end position="72"/>
    </location>
</feature>
<feature type="helix" evidence="9">
    <location>
        <begin position="75"/>
        <end position="78"/>
    </location>
</feature>
<feature type="helix" evidence="9">
    <location>
        <begin position="84"/>
        <end position="107"/>
    </location>
</feature>
<feature type="strand" evidence="7">
    <location>
        <begin position="110"/>
        <end position="112"/>
    </location>
</feature>
<geneLocation type="mitochondrion"/>
<accession>P03899</accession>
<accession>Q35039</accession>
<accession>Q35040</accession>
<accession>Q9MD73</accession>
<protein>
    <recommendedName>
        <fullName evidence="4">NADH-ubiquinone oxidoreductase chain 3</fullName>
        <ecNumber evidence="1">7.1.1.2</ecNumber>
    </recommendedName>
    <alternativeName>
        <fullName>NADH dehydrogenase subunit 3</fullName>
    </alternativeName>
</protein>
<keyword id="KW-0002">3D-structure</keyword>
<keyword id="KW-0249">Electron transport</keyword>
<keyword id="KW-0472">Membrane</keyword>
<keyword id="KW-0496">Mitochondrion</keyword>
<keyword id="KW-0999">Mitochondrion inner membrane</keyword>
<keyword id="KW-0520">NAD</keyword>
<keyword id="KW-1185">Reference proteome</keyword>
<keyword id="KW-0679">Respiratory chain</keyword>
<keyword id="KW-1278">Translocase</keyword>
<keyword id="KW-0812">Transmembrane</keyword>
<keyword id="KW-1133">Transmembrane helix</keyword>
<keyword id="KW-0813">Transport</keyword>
<keyword id="KW-0830">Ubiquinone</keyword>
<gene>
    <name evidence="5" type="primary">mt-Nd3</name>
    <name type="synonym">Nd3</name>
</gene>
<name>NU3M_MOUSE</name>
<dbReference type="EC" id="7.1.1.2" evidence="1"/>
<dbReference type="EMBL" id="J01420">
    <property type="protein sequence ID" value="AAB48651.1"/>
    <property type="molecule type" value="Genomic_DNA"/>
</dbReference>
<dbReference type="EMBL" id="V00711">
    <property type="protein sequence ID" value="CAA24086.1"/>
    <property type="molecule type" value="Genomic_DNA"/>
</dbReference>
<dbReference type="EMBL" id="U09637">
    <property type="protein sequence ID" value="AAA19254.2"/>
    <property type="molecule type" value="Genomic_DNA"/>
</dbReference>
<dbReference type="EMBL" id="U09638">
    <property type="protein sequence ID" value="AAA19255.2"/>
    <property type="molecule type" value="Genomic_DNA"/>
</dbReference>
<dbReference type="EMBL" id="AB042432">
    <property type="protein sequence ID" value="BAA95623.1"/>
    <property type="molecule type" value="Genomic_DNA"/>
</dbReference>
<dbReference type="EMBL" id="AB042523">
    <property type="protein sequence ID" value="BAA95660.1"/>
    <property type="molecule type" value="Genomic_DNA"/>
</dbReference>
<dbReference type="EMBL" id="AB042524">
    <property type="protein sequence ID" value="BAA95647.1"/>
    <property type="molecule type" value="Genomic_DNA"/>
</dbReference>
<dbReference type="EMBL" id="AB042809">
    <property type="protein sequence ID" value="BAA95802.1"/>
    <property type="molecule type" value="Genomic_DNA"/>
</dbReference>
<dbReference type="EMBL" id="AB049357">
    <property type="protein sequence ID" value="BAB13808.1"/>
    <property type="molecule type" value="Genomic_DNA"/>
</dbReference>
<dbReference type="EMBL" id="AY172335">
    <property type="protein sequence ID" value="AAN85129.1"/>
    <property type="molecule type" value="Genomic_DNA"/>
</dbReference>
<dbReference type="PIR" id="A55746">
    <property type="entry name" value="A55746"/>
</dbReference>
<dbReference type="PIR" id="B55746">
    <property type="entry name" value="QXMS3M"/>
</dbReference>
<dbReference type="RefSeq" id="NP_904335.1">
    <property type="nucleotide sequence ID" value="NC_005089.1"/>
</dbReference>
<dbReference type="RefSeq" id="YP_220557.1">
    <property type="nucleotide sequence ID" value="NC_006914.1"/>
</dbReference>
<dbReference type="PDB" id="6G2J">
    <property type="method" value="EM"/>
    <property type="resolution" value="3.30 A"/>
    <property type="chains" value="A=1-115"/>
</dbReference>
<dbReference type="PDB" id="6G72">
    <property type="method" value="EM"/>
    <property type="resolution" value="3.90 A"/>
    <property type="chains" value="A=1-115"/>
</dbReference>
<dbReference type="PDB" id="6ZR2">
    <property type="method" value="EM"/>
    <property type="resolution" value="3.10 A"/>
    <property type="chains" value="A=1-115"/>
</dbReference>
<dbReference type="PDB" id="6ZTQ">
    <property type="method" value="EM"/>
    <property type="resolution" value="3.00 A"/>
    <property type="chains" value="A=1-115"/>
</dbReference>
<dbReference type="PDB" id="7AK5">
    <property type="method" value="EM"/>
    <property type="resolution" value="3.17 A"/>
    <property type="chains" value="A=1-115"/>
</dbReference>
<dbReference type="PDB" id="7AK6">
    <property type="method" value="EM"/>
    <property type="resolution" value="3.82 A"/>
    <property type="chains" value="A=1-115"/>
</dbReference>
<dbReference type="PDB" id="7B93">
    <property type="method" value="EM"/>
    <property type="resolution" value="3.04 A"/>
    <property type="chains" value="A=1-115"/>
</dbReference>
<dbReference type="PDB" id="7PSA">
    <property type="method" value="EM"/>
    <property type="resolution" value="3.40 A"/>
    <property type="chains" value="A=1-115"/>
</dbReference>
<dbReference type="PDB" id="8C2S">
    <property type="method" value="EM"/>
    <property type="resolution" value="3.90 A"/>
    <property type="chains" value="A=1-115"/>
</dbReference>
<dbReference type="PDB" id="8CA3">
    <property type="method" value="EM"/>
    <property type="resolution" value="3.20 A"/>
    <property type="chains" value="A=1-115"/>
</dbReference>
<dbReference type="PDB" id="8CA5">
    <property type="method" value="EM"/>
    <property type="resolution" value="3.90 A"/>
    <property type="chains" value="A=1-115"/>
</dbReference>
<dbReference type="PDB" id="8IAO">
    <property type="method" value="EM"/>
    <property type="resolution" value="4.20 A"/>
    <property type="chains" value="A=1-115"/>
</dbReference>
<dbReference type="PDB" id="8IAP">
    <property type="method" value="EM"/>
    <property type="resolution" value="3.20 A"/>
    <property type="chains" value="A=1-115"/>
</dbReference>
<dbReference type="PDB" id="8IB4">
    <property type="method" value="EM"/>
    <property type="resolution" value="4.30 A"/>
    <property type="chains" value="A=1-115"/>
</dbReference>
<dbReference type="PDB" id="8IB5">
    <property type="method" value="EM"/>
    <property type="resolution" value="3.30 A"/>
    <property type="chains" value="A=1-115"/>
</dbReference>
<dbReference type="PDB" id="8IB9">
    <property type="method" value="EM"/>
    <property type="resolution" value="4.30 A"/>
    <property type="chains" value="A=1-115"/>
</dbReference>
<dbReference type="PDB" id="8IBA">
    <property type="method" value="EM"/>
    <property type="resolution" value="3.20 A"/>
    <property type="chains" value="A=1-115"/>
</dbReference>
<dbReference type="PDB" id="8IBD">
    <property type="method" value="EM"/>
    <property type="resolution" value="4.20 A"/>
    <property type="chains" value="A=1-115"/>
</dbReference>
<dbReference type="PDB" id="8IBE">
    <property type="method" value="EM"/>
    <property type="resolution" value="3.30 A"/>
    <property type="chains" value="A=1-115"/>
</dbReference>
<dbReference type="PDB" id="8IC2">
    <property type="method" value="EM"/>
    <property type="resolution" value="6.30 A"/>
    <property type="chains" value="A=1-115"/>
</dbReference>
<dbReference type="PDB" id="8IC3">
    <property type="method" value="EM"/>
    <property type="resolution" value="3.20 A"/>
    <property type="chains" value="A=1-115"/>
</dbReference>
<dbReference type="PDB" id="8OLT">
    <property type="method" value="EM"/>
    <property type="resolution" value="2.84 A"/>
    <property type="chains" value="A=1-115"/>
</dbReference>
<dbReference type="PDB" id="8OM1">
    <property type="method" value="EM"/>
    <property type="resolution" value="2.39 A"/>
    <property type="chains" value="A=1-115"/>
</dbReference>
<dbReference type="PDB" id="8PW5">
    <property type="method" value="EM"/>
    <property type="resolution" value="3.60 A"/>
    <property type="chains" value="A1=1-115"/>
</dbReference>
<dbReference type="PDB" id="8PW6">
    <property type="method" value="EM"/>
    <property type="resolution" value="3.30 A"/>
    <property type="chains" value="A1=1-115"/>
</dbReference>
<dbReference type="PDB" id="8PW7">
    <property type="method" value="EM"/>
    <property type="resolution" value="3.50 A"/>
    <property type="chains" value="A1=1-115"/>
</dbReference>
<dbReference type="PDB" id="8RGP">
    <property type="method" value="EM"/>
    <property type="resolution" value="3.00 A"/>
    <property type="chains" value="A=1-115"/>
</dbReference>
<dbReference type="PDB" id="8RGQ">
    <property type="method" value="EM"/>
    <property type="resolution" value="3.00 A"/>
    <property type="chains" value="A=1-115"/>
</dbReference>
<dbReference type="PDB" id="8RGR">
    <property type="method" value="EM"/>
    <property type="resolution" value="2.90 A"/>
    <property type="chains" value="A=1-115"/>
</dbReference>
<dbReference type="PDB" id="8RGT">
    <property type="method" value="EM"/>
    <property type="resolution" value="3.10 A"/>
    <property type="chains" value="A=1-115"/>
</dbReference>
<dbReference type="PDB" id="8UCA">
    <property type="method" value="EM"/>
    <property type="resolution" value="3.70 A"/>
    <property type="chains" value="3/3a=1-115"/>
</dbReference>
<dbReference type="PDB" id="8XNL">
    <property type="method" value="EM"/>
    <property type="resolution" value="3.10 A"/>
    <property type="chains" value="A=1-115"/>
</dbReference>
<dbReference type="PDB" id="8XNM">
    <property type="method" value="EM"/>
    <property type="resolution" value="3.50 A"/>
    <property type="chains" value="A=1-115"/>
</dbReference>
<dbReference type="PDB" id="8XNN">
    <property type="method" value="EM"/>
    <property type="resolution" value="3.60 A"/>
    <property type="chains" value="A=1-115"/>
</dbReference>
<dbReference type="PDB" id="8XNO">
    <property type="method" value="EM"/>
    <property type="resolution" value="3.40 A"/>
    <property type="chains" value="A=1-115"/>
</dbReference>
<dbReference type="PDB" id="8XNP">
    <property type="method" value="EM"/>
    <property type="resolution" value="3.50 A"/>
    <property type="chains" value="A=1-115"/>
</dbReference>
<dbReference type="PDB" id="8XNQ">
    <property type="method" value="EM"/>
    <property type="resolution" value="3.70 A"/>
    <property type="chains" value="A=1-115"/>
</dbReference>
<dbReference type="PDB" id="8XNR">
    <property type="method" value="EM"/>
    <property type="resolution" value="3.30 A"/>
    <property type="chains" value="A=1-115"/>
</dbReference>
<dbReference type="PDB" id="8XNS">
    <property type="method" value="EM"/>
    <property type="resolution" value="3.50 A"/>
    <property type="chains" value="A=1-115"/>
</dbReference>
<dbReference type="PDB" id="8XNT">
    <property type="method" value="EM"/>
    <property type="resolution" value="4.10 A"/>
    <property type="chains" value="A=1-115"/>
</dbReference>
<dbReference type="PDB" id="8XNU">
    <property type="method" value="EM"/>
    <property type="resolution" value="3.60 A"/>
    <property type="chains" value="A=1-115"/>
</dbReference>
<dbReference type="PDB" id="8XNV">
    <property type="method" value="EM"/>
    <property type="resolution" value="3.30 A"/>
    <property type="chains" value="A=1-115"/>
</dbReference>
<dbReference type="PDB" id="8XNW">
    <property type="method" value="EM"/>
    <property type="resolution" value="3.60 A"/>
    <property type="chains" value="A=1-115"/>
</dbReference>
<dbReference type="PDB" id="8XNX">
    <property type="method" value="EM"/>
    <property type="resolution" value="3.50 A"/>
    <property type="chains" value="A=1-115"/>
</dbReference>
<dbReference type="PDB" id="8XNY">
    <property type="method" value="EM"/>
    <property type="resolution" value="4.10 A"/>
    <property type="chains" value="A=1-115"/>
</dbReference>
<dbReference type="PDB" id="8XNZ">
    <property type="method" value="EM"/>
    <property type="resolution" value="3.30 A"/>
    <property type="chains" value="A=1-115"/>
</dbReference>
<dbReference type="PDB" id="8XO0">
    <property type="method" value="EM"/>
    <property type="resolution" value="4.20 A"/>
    <property type="chains" value="A=1-115"/>
</dbReference>
<dbReference type="PDBsum" id="6G2J"/>
<dbReference type="PDBsum" id="6G72"/>
<dbReference type="PDBsum" id="6ZR2"/>
<dbReference type="PDBsum" id="6ZTQ"/>
<dbReference type="PDBsum" id="7AK5"/>
<dbReference type="PDBsum" id="7AK6"/>
<dbReference type="PDBsum" id="7B93"/>
<dbReference type="PDBsum" id="7PSA"/>
<dbReference type="PDBsum" id="8C2S"/>
<dbReference type="PDBsum" id="8CA3"/>
<dbReference type="PDBsum" id="8CA5"/>
<dbReference type="PDBsum" id="8IAO"/>
<dbReference type="PDBsum" id="8IAP"/>
<dbReference type="PDBsum" id="8IB4"/>
<dbReference type="PDBsum" id="8IB5"/>
<dbReference type="PDBsum" id="8IB9"/>
<dbReference type="PDBsum" id="8IBA"/>
<dbReference type="PDBsum" id="8IBD"/>
<dbReference type="PDBsum" id="8IBE"/>
<dbReference type="PDBsum" id="8IC2"/>
<dbReference type="PDBsum" id="8IC3"/>
<dbReference type="PDBsum" id="8OLT"/>
<dbReference type="PDBsum" id="8OM1"/>
<dbReference type="PDBsum" id="8PW5"/>
<dbReference type="PDBsum" id="8PW6"/>
<dbReference type="PDBsum" id="8PW7"/>
<dbReference type="PDBsum" id="8RGP"/>
<dbReference type="PDBsum" id="8RGQ"/>
<dbReference type="PDBsum" id="8RGR"/>
<dbReference type="PDBsum" id="8RGT"/>
<dbReference type="PDBsum" id="8UCA"/>
<dbReference type="PDBsum" id="8XNL"/>
<dbReference type="PDBsum" id="8XNM"/>
<dbReference type="PDBsum" id="8XNN"/>
<dbReference type="PDBsum" id="8XNO"/>
<dbReference type="PDBsum" id="8XNP"/>
<dbReference type="PDBsum" id="8XNQ"/>
<dbReference type="PDBsum" id="8XNR"/>
<dbReference type="PDBsum" id="8XNS"/>
<dbReference type="PDBsum" id="8XNT"/>
<dbReference type="PDBsum" id="8XNU"/>
<dbReference type="PDBsum" id="8XNV"/>
<dbReference type="PDBsum" id="8XNW"/>
<dbReference type="PDBsum" id="8XNX"/>
<dbReference type="PDBsum" id="8XNY"/>
<dbReference type="PDBsum" id="8XNZ"/>
<dbReference type="PDBsum" id="8XO0"/>
<dbReference type="EMDB" id="EMD-11377"/>
<dbReference type="EMDB" id="EMD-11424"/>
<dbReference type="EMDB" id="EMD-11810"/>
<dbReference type="EMDB" id="EMD-11811"/>
<dbReference type="EMDB" id="EMD-12095"/>
<dbReference type="EMDB" id="EMD-13611"/>
<dbReference type="EMDB" id="EMD-16398"/>
<dbReference type="EMDB" id="EMD-16516"/>
<dbReference type="EMDB" id="EMD-16518"/>
<dbReference type="EMDB" id="EMD-16962"/>
<dbReference type="EMDB" id="EMD-16965"/>
<dbReference type="EMDB" id="EMD-17989"/>
<dbReference type="EMDB" id="EMD-17990"/>
<dbReference type="EMDB" id="EMD-17991"/>
<dbReference type="EMDB" id="EMD-19145"/>
<dbReference type="EMDB" id="EMD-19146"/>
<dbReference type="EMDB" id="EMD-19147"/>
<dbReference type="EMDB" id="EMD-19148"/>
<dbReference type="EMDB" id="EMD-35313"/>
<dbReference type="EMDB" id="EMD-35314"/>
<dbReference type="EMDB" id="EMD-35331"/>
<dbReference type="EMDB" id="EMD-35332"/>
<dbReference type="EMDB" id="EMD-35336"/>
<dbReference type="EMDB" id="EMD-35337"/>
<dbReference type="EMDB" id="EMD-35340"/>
<dbReference type="EMDB" id="EMD-35341"/>
<dbReference type="EMDB" id="EMD-35352"/>
<dbReference type="EMDB" id="EMD-35353"/>
<dbReference type="EMDB" id="EMD-38506"/>
<dbReference type="EMDB" id="EMD-38507"/>
<dbReference type="EMDB" id="EMD-38508"/>
<dbReference type="EMDB" id="EMD-38509"/>
<dbReference type="EMDB" id="EMD-38510"/>
<dbReference type="EMDB" id="EMD-38511"/>
<dbReference type="EMDB" id="EMD-38512"/>
<dbReference type="EMDB" id="EMD-38513"/>
<dbReference type="EMDB" id="EMD-38514"/>
<dbReference type="EMDB" id="EMD-38515"/>
<dbReference type="EMDB" id="EMD-38516"/>
<dbReference type="EMDB" id="EMD-38517"/>
<dbReference type="EMDB" id="EMD-38518"/>
<dbReference type="EMDB" id="EMD-38519"/>
<dbReference type="EMDB" id="EMD-38520"/>
<dbReference type="EMDB" id="EMD-38521"/>
<dbReference type="EMDB" id="EMD-42122"/>
<dbReference type="EMDB" id="EMD-4345"/>
<dbReference type="EMDB" id="EMD-4356"/>
<dbReference type="SMR" id="P03899"/>
<dbReference type="BioGRID" id="201549">
    <property type="interactions" value="2"/>
</dbReference>
<dbReference type="ComplexPortal" id="CPX-266">
    <property type="entry name" value="Mitochondrial respiratory chain complex I"/>
</dbReference>
<dbReference type="CORUM" id="P03899"/>
<dbReference type="FunCoup" id="P03899">
    <property type="interactions" value="140"/>
</dbReference>
<dbReference type="IntAct" id="P03899">
    <property type="interactions" value="1"/>
</dbReference>
<dbReference type="STRING" id="10090.ENSMUSP00000080998"/>
<dbReference type="GlyGen" id="P03899">
    <property type="glycosylation" value="1 site, 1 O-linked glycan (1 site)"/>
</dbReference>
<dbReference type="iPTMnet" id="P03899"/>
<dbReference type="PhosphoSitePlus" id="P03899"/>
<dbReference type="SwissPalm" id="P03899"/>
<dbReference type="jPOST" id="P03899"/>
<dbReference type="PaxDb" id="10090-ENSMUSP00000080998"/>
<dbReference type="PeptideAtlas" id="P03899"/>
<dbReference type="ProteomicsDB" id="295541"/>
<dbReference type="Pumba" id="P03899"/>
<dbReference type="Antibodypedia" id="68603">
    <property type="antibodies" value="124 antibodies from 24 providers"/>
</dbReference>
<dbReference type="Ensembl" id="ENSMUST00000082411.1">
    <property type="protein sequence ID" value="ENSMUSP00000080998.1"/>
    <property type="gene ID" value="ENSMUSG00000064360.1"/>
</dbReference>
<dbReference type="GeneID" id="17718"/>
<dbReference type="GeneID" id="3338896"/>
<dbReference type="KEGG" id="mmu:17718"/>
<dbReference type="AGR" id="MGI:102499"/>
<dbReference type="CTD" id="4537"/>
<dbReference type="MGI" id="MGI:102499">
    <property type="gene designation" value="mt-Nd3"/>
</dbReference>
<dbReference type="VEuPathDB" id="HostDB:ENSMUSG00000064360"/>
<dbReference type="eggNOG" id="KOG4662">
    <property type="taxonomic scope" value="Eukaryota"/>
</dbReference>
<dbReference type="GeneTree" id="ENSGT00390000011605"/>
<dbReference type="HOGENOM" id="CLU_119549_3_1_1"/>
<dbReference type="InParanoid" id="P03899"/>
<dbReference type="OMA" id="GPRRYNR"/>
<dbReference type="OrthoDB" id="154075at2759"/>
<dbReference type="PhylomeDB" id="P03899"/>
<dbReference type="Reactome" id="R-MMU-611105">
    <property type="pathway name" value="Respiratory electron transport"/>
</dbReference>
<dbReference type="Reactome" id="R-MMU-6799198">
    <property type="pathway name" value="Complex I biogenesis"/>
</dbReference>
<dbReference type="ChiTaRS" id="mt-Nd3">
    <property type="organism name" value="mouse"/>
</dbReference>
<dbReference type="PRO" id="PR:P03899"/>
<dbReference type="Proteomes" id="UP000000589">
    <property type="component" value="Mitochondrion MT"/>
</dbReference>
<dbReference type="RNAct" id="P03899">
    <property type="molecule type" value="protein"/>
</dbReference>
<dbReference type="Bgee" id="ENSMUSG00000064360">
    <property type="expression patterns" value="Expressed in hypothalamus and 63 other cell types or tissues"/>
</dbReference>
<dbReference type="ExpressionAtlas" id="P03899">
    <property type="expression patterns" value="baseline and differential"/>
</dbReference>
<dbReference type="GO" id="GO:0005743">
    <property type="term" value="C:mitochondrial inner membrane"/>
    <property type="evidence" value="ECO:0000314"/>
    <property type="project" value="UniProtKB"/>
</dbReference>
<dbReference type="GO" id="GO:0005739">
    <property type="term" value="C:mitochondrion"/>
    <property type="evidence" value="ECO:0007005"/>
    <property type="project" value="MGI"/>
</dbReference>
<dbReference type="GO" id="GO:0045271">
    <property type="term" value="C:respiratory chain complex I"/>
    <property type="evidence" value="ECO:0000314"/>
    <property type="project" value="UniProtKB"/>
</dbReference>
<dbReference type="GO" id="GO:0008137">
    <property type="term" value="F:NADH dehydrogenase (ubiquinone) activity"/>
    <property type="evidence" value="ECO:0000250"/>
    <property type="project" value="UniProtKB"/>
</dbReference>
<dbReference type="GO" id="GO:0009060">
    <property type="term" value="P:aerobic respiration"/>
    <property type="evidence" value="ECO:0000303"/>
    <property type="project" value="ComplexPortal"/>
</dbReference>
<dbReference type="GO" id="GO:0071385">
    <property type="term" value="P:cellular response to glucocorticoid stimulus"/>
    <property type="evidence" value="ECO:0007669"/>
    <property type="project" value="Ensembl"/>
</dbReference>
<dbReference type="GO" id="GO:0006120">
    <property type="term" value="P:mitochondrial electron transport, NADH to ubiquinone"/>
    <property type="evidence" value="ECO:0000250"/>
    <property type="project" value="UniProtKB"/>
</dbReference>
<dbReference type="GO" id="GO:0042776">
    <property type="term" value="P:proton motive force-driven mitochondrial ATP synthesis"/>
    <property type="evidence" value="ECO:0000303"/>
    <property type="project" value="ComplexPortal"/>
</dbReference>
<dbReference type="GO" id="GO:0009642">
    <property type="term" value="P:response to light intensity"/>
    <property type="evidence" value="ECO:0007669"/>
    <property type="project" value="Ensembl"/>
</dbReference>
<dbReference type="GO" id="GO:0006979">
    <property type="term" value="P:response to oxidative stress"/>
    <property type="evidence" value="ECO:0007669"/>
    <property type="project" value="Ensembl"/>
</dbReference>
<dbReference type="FunFam" id="1.20.58.1610:FF:000004">
    <property type="entry name" value="NADH-quinone oxidoreductase subunit A"/>
    <property type="match status" value="1"/>
</dbReference>
<dbReference type="Gene3D" id="1.20.58.1610">
    <property type="entry name" value="NADH:ubiquinone/plastoquinone oxidoreductase, chain 3"/>
    <property type="match status" value="1"/>
</dbReference>
<dbReference type="InterPro" id="IPR000440">
    <property type="entry name" value="NADH_UbQ/plastoQ_OxRdtase_su3"/>
</dbReference>
<dbReference type="InterPro" id="IPR038430">
    <property type="entry name" value="NDAH_ubi_oxred_su3_sf"/>
</dbReference>
<dbReference type="PANTHER" id="PTHR11058">
    <property type="entry name" value="NADH-UBIQUINONE OXIDOREDUCTASE CHAIN 3"/>
    <property type="match status" value="1"/>
</dbReference>
<dbReference type="PANTHER" id="PTHR11058:SF9">
    <property type="entry name" value="NADH-UBIQUINONE OXIDOREDUCTASE CHAIN 3"/>
    <property type="match status" value="1"/>
</dbReference>
<dbReference type="Pfam" id="PF00507">
    <property type="entry name" value="Oxidored_q4"/>
    <property type="match status" value="1"/>
</dbReference>
<evidence type="ECO:0000250" key="1">
    <source>
        <dbReference type="UniProtKB" id="P03897"/>
    </source>
</evidence>
<evidence type="ECO:0000255" key="2"/>
<evidence type="ECO:0000269" key="3">
    <source>
    </source>
</evidence>
<evidence type="ECO:0000305" key="4"/>
<evidence type="ECO:0000312" key="5">
    <source>
        <dbReference type="MGI" id="MGI:102499"/>
    </source>
</evidence>
<evidence type="ECO:0007744" key="6">
    <source>
        <dbReference type="PDB" id="8PW5"/>
    </source>
</evidence>
<evidence type="ECO:0007829" key="7">
    <source>
        <dbReference type="PDB" id="6ZTQ"/>
    </source>
</evidence>
<evidence type="ECO:0007829" key="8">
    <source>
        <dbReference type="PDB" id="8IBA"/>
    </source>
</evidence>
<evidence type="ECO:0007829" key="9">
    <source>
        <dbReference type="PDB" id="8OM1"/>
    </source>
</evidence>
<evidence type="ECO:0007829" key="10">
    <source>
        <dbReference type="PDB" id="8RGP"/>
    </source>
</evidence>
<organism>
    <name type="scientific">Mus musculus</name>
    <name type="common">Mouse</name>
    <dbReference type="NCBI Taxonomy" id="10090"/>
    <lineage>
        <taxon>Eukaryota</taxon>
        <taxon>Metazoa</taxon>
        <taxon>Chordata</taxon>
        <taxon>Craniata</taxon>
        <taxon>Vertebrata</taxon>
        <taxon>Euteleostomi</taxon>
        <taxon>Mammalia</taxon>
        <taxon>Eutheria</taxon>
        <taxon>Euarchontoglires</taxon>
        <taxon>Glires</taxon>
        <taxon>Rodentia</taxon>
        <taxon>Myomorpha</taxon>
        <taxon>Muroidea</taxon>
        <taxon>Muridae</taxon>
        <taxon>Murinae</taxon>
        <taxon>Mus</taxon>
        <taxon>Mus</taxon>
    </lineage>
</organism>